<organism>
    <name type="scientific">Paracoccus denitrificans (strain Pd 1222)</name>
    <dbReference type="NCBI Taxonomy" id="318586"/>
    <lineage>
        <taxon>Bacteria</taxon>
        <taxon>Pseudomonadati</taxon>
        <taxon>Pseudomonadota</taxon>
        <taxon>Alphaproteobacteria</taxon>
        <taxon>Rhodobacterales</taxon>
        <taxon>Paracoccaceae</taxon>
        <taxon>Paracoccus</taxon>
    </lineage>
</organism>
<protein>
    <recommendedName>
        <fullName evidence="1">Urease subunit alpha</fullName>
        <ecNumber evidence="1">3.5.1.5</ecNumber>
    </recommendedName>
    <alternativeName>
        <fullName evidence="1">Urea amidohydrolase subunit alpha</fullName>
    </alternativeName>
</protein>
<evidence type="ECO:0000255" key="1">
    <source>
        <dbReference type="HAMAP-Rule" id="MF_01953"/>
    </source>
</evidence>
<sequence length="562" mass="59666">MGQTLSRADYAALYGPTTGDRIRLADTELLIEVERDLTIPGEEVRFGGGKVVRDGMGQSQVTREAGAMDTVITGAVVFDHQGITKADVGLRDGRIAGIGKAGNPDTQPGVTLIIGPGTEIIAGEGRILTPGGMDCHIHFICPQQVDHALHSGVTTLLGGGTGPAHGTLATTCTPGPWHIARMLEACAELPVNIGIAGKGNASLPAALEEQVRAGACALKLHEDWGTTPAAIDCCLTVADAMDVQVMIHTDTLNESGFVEDTMAAIAGRTIHAYHTEGAGGGHAPDIIRMVGMGNVLPSSTNPTRPYTGNTIEEHLDMLMVCHHLDRRVPEDVAFAESRIRRETIAAEDILHDLGAFSVISSDSQAMGRIGEVIIRTWQTADKMRRQRGRLAGETGENDNLRARRYIAKYTINPAIAHGISTHVGSIEPGKRADLVLWSPAFFGVKPEMVLVGGRISVAQMGDPNGSIPVQPIFSRPMWGHAGRASALFLSRAGLEAGAGDGLGKALIAVEQTRGIGKADMVLNDAMPQIEVDPETYEVRADGELLTCEPATELPMAQRYFLF</sequence>
<reference key="1">
    <citation type="submission" date="2006-12" db="EMBL/GenBank/DDBJ databases">
        <title>Complete sequence of chromosome 1 of Paracoccus denitrificans PD1222.</title>
        <authorList>
            <person name="Copeland A."/>
            <person name="Lucas S."/>
            <person name="Lapidus A."/>
            <person name="Barry K."/>
            <person name="Detter J.C."/>
            <person name="Glavina del Rio T."/>
            <person name="Hammon N."/>
            <person name="Israni S."/>
            <person name="Dalin E."/>
            <person name="Tice H."/>
            <person name="Pitluck S."/>
            <person name="Munk A.C."/>
            <person name="Brettin T."/>
            <person name="Bruce D."/>
            <person name="Han C."/>
            <person name="Tapia R."/>
            <person name="Gilna P."/>
            <person name="Schmutz J."/>
            <person name="Larimer F."/>
            <person name="Land M."/>
            <person name="Hauser L."/>
            <person name="Kyrpides N."/>
            <person name="Lykidis A."/>
            <person name="Spiro S."/>
            <person name="Richardson D.J."/>
            <person name="Moir J.W.B."/>
            <person name="Ferguson S.J."/>
            <person name="van Spanning R.J.M."/>
            <person name="Richardson P."/>
        </authorList>
    </citation>
    <scope>NUCLEOTIDE SEQUENCE [LARGE SCALE GENOMIC DNA]</scope>
    <source>
        <strain>Pd 1222</strain>
    </source>
</reference>
<gene>
    <name evidence="1" type="primary">ureC</name>
    <name type="ordered locus">Pden_1208</name>
</gene>
<dbReference type="EC" id="3.5.1.5" evidence="1"/>
<dbReference type="EMBL" id="CP000489">
    <property type="protein sequence ID" value="ABL69313.1"/>
    <property type="molecule type" value="Genomic_DNA"/>
</dbReference>
<dbReference type="RefSeq" id="WP_011747531.1">
    <property type="nucleotide sequence ID" value="NC_008686.1"/>
</dbReference>
<dbReference type="SMR" id="A1B1B9"/>
<dbReference type="STRING" id="318586.Pden_1208"/>
<dbReference type="EnsemblBacteria" id="ABL69313">
    <property type="protein sequence ID" value="ABL69313"/>
    <property type="gene ID" value="Pden_1208"/>
</dbReference>
<dbReference type="GeneID" id="93452424"/>
<dbReference type="KEGG" id="pde:Pden_1208"/>
<dbReference type="eggNOG" id="COG0804">
    <property type="taxonomic scope" value="Bacteria"/>
</dbReference>
<dbReference type="HOGENOM" id="CLU_000980_2_0_5"/>
<dbReference type="OrthoDB" id="9802793at2"/>
<dbReference type="UniPathway" id="UPA00258">
    <property type="reaction ID" value="UER00370"/>
</dbReference>
<dbReference type="Proteomes" id="UP000000361">
    <property type="component" value="Chromosome 1"/>
</dbReference>
<dbReference type="GO" id="GO:0005737">
    <property type="term" value="C:cytoplasm"/>
    <property type="evidence" value="ECO:0007669"/>
    <property type="project" value="UniProtKB-SubCell"/>
</dbReference>
<dbReference type="GO" id="GO:0016151">
    <property type="term" value="F:nickel cation binding"/>
    <property type="evidence" value="ECO:0007669"/>
    <property type="project" value="UniProtKB-UniRule"/>
</dbReference>
<dbReference type="GO" id="GO:0009039">
    <property type="term" value="F:urease activity"/>
    <property type="evidence" value="ECO:0007669"/>
    <property type="project" value="UniProtKB-UniRule"/>
</dbReference>
<dbReference type="GO" id="GO:0043419">
    <property type="term" value="P:urea catabolic process"/>
    <property type="evidence" value="ECO:0007669"/>
    <property type="project" value="UniProtKB-UniRule"/>
</dbReference>
<dbReference type="CDD" id="cd00375">
    <property type="entry name" value="Urease_alpha"/>
    <property type="match status" value="1"/>
</dbReference>
<dbReference type="Gene3D" id="3.20.20.140">
    <property type="entry name" value="Metal-dependent hydrolases"/>
    <property type="match status" value="1"/>
</dbReference>
<dbReference type="Gene3D" id="2.30.40.10">
    <property type="entry name" value="Urease, subunit C, domain 1"/>
    <property type="match status" value="1"/>
</dbReference>
<dbReference type="HAMAP" id="MF_01953">
    <property type="entry name" value="Urease_alpha"/>
    <property type="match status" value="1"/>
</dbReference>
<dbReference type="InterPro" id="IPR006680">
    <property type="entry name" value="Amidohydro-rel"/>
</dbReference>
<dbReference type="InterPro" id="IPR011059">
    <property type="entry name" value="Metal-dep_hydrolase_composite"/>
</dbReference>
<dbReference type="InterPro" id="IPR032466">
    <property type="entry name" value="Metal_Hydrolase"/>
</dbReference>
<dbReference type="InterPro" id="IPR011612">
    <property type="entry name" value="Urease_alpha_N_dom"/>
</dbReference>
<dbReference type="InterPro" id="IPR050112">
    <property type="entry name" value="Urease_alpha_subunit"/>
</dbReference>
<dbReference type="InterPro" id="IPR017950">
    <property type="entry name" value="Urease_AS"/>
</dbReference>
<dbReference type="InterPro" id="IPR005848">
    <property type="entry name" value="Urease_asu"/>
</dbReference>
<dbReference type="InterPro" id="IPR017951">
    <property type="entry name" value="Urease_asu_c"/>
</dbReference>
<dbReference type="NCBIfam" id="NF009686">
    <property type="entry name" value="PRK13207.1"/>
    <property type="match status" value="1"/>
</dbReference>
<dbReference type="NCBIfam" id="TIGR01792">
    <property type="entry name" value="urease_alph"/>
    <property type="match status" value="1"/>
</dbReference>
<dbReference type="PANTHER" id="PTHR43440">
    <property type="entry name" value="UREASE"/>
    <property type="match status" value="1"/>
</dbReference>
<dbReference type="PANTHER" id="PTHR43440:SF1">
    <property type="entry name" value="UREASE"/>
    <property type="match status" value="1"/>
</dbReference>
<dbReference type="Pfam" id="PF01979">
    <property type="entry name" value="Amidohydro_1"/>
    <property type="match status" value="1"/>
</dbReference>
<dbReference type="Pfam" id="PF00449">
    <property type="entry name" value="Urease_alpha"/>
    <property type="match status" value="1"/>
</dbReference>
<dbReference type="PRINTS" id="PR01752">
    <property type="entry name" value="UREASE"/>
</dbReference>
<dbReference type="SUPFAM" id="SSF51338">
    <property type="entry name" value="Composite domain of metallo-dependent hydrolases"/>
    <property type="match status" value="1"/>
</dbReference>
<dbReference type="SUPFAM" id="SSF51556">
    <property type="entry name" value="Metallo-dependent hydrolases"/>
    <property type="match status" value="1"/>
</dbReference>
<dbReference type="PROSITE" id="PS00145">
    <property type="entry name" value="UREASE_2"/>
    <property type="match status" value="1"/>
</dbReference>
<dbReference type="PROSITE" id="PS51368">
    <property type="entry name" value="UREASE_3"/>
    <property type="match status" value="1"/>
</dbReference>
<comment type="catalytic activity">
    <reaction evidence="1">
        <text>urea + 2 H2O + H(+) = hydrogencarbonate + 2 NH4(+)</text>
        <dbReference type="Rhea" id="RHEA:20557"/>
        <dbReference type="ChEBI" id="CHEBI:15377"/>
        <dbReference type="ChEBI" id="CHEBI:15378"/>
        <dbReference type="ChEBI" id="CHEBI:16199"/>
        <dbReference type="ChEBI" id="CHEBI:17544"/>
        <dbReference type="ChEBI" id="CHEBI:28938"/>
        <dbReference type="EC" id="3.5.1.5"/>
    </reaction>
</comment>
<comment type="cofactor">
    <cofactor evidence="1">
        <name>Ni cation</name>
        <dbReference type="ChEBI" id="CHEBI:25516"/>
    </cofactor>
    <text evidence="1">Binds 2 nickel ions per subunit.</text>
</comment>
<comment type="pathway">
    <text evidence="1">Nitrogen metabolism; urea degradation; CO(2) and NH(3) from urea (urease route): step 1/1.</text>
</comment>
<comment type="subunit">
    <text evidence="1">Heterotrimer of UreA (gamma), UreB (beta) and UreC (alpha) subunits. Three heterotrimers associate to form the active enzyme.</text>
</comment>
<comment type="subcellular location">
    <subcellularLocation>
        <location evidence="1">Cytoplasm</location>
    </subcellularLocation>
</comment>
<comment type="PTM">
    <text evidence="1">Carboxylation allows a single lysine to coordinate two nickel ions.</text>
</comment>
<comment type="similarity">
    <text evidence="1">Belongs to the metallo-dependent hydrolases superfamily. Urease alpha subunit family.</text>
</comment>
<name>URE1_PARDP</name>
<proteinExistence type="inferred from homology"/>
<accession>A1B1B9</accession>
<keyword id="KW-0963">Cytoplasm</keyword>
<keyword id="KW-0378">Hydrolase</keyword>
<keyword id="KW-0479">Metal-binding</keyword>
<keyword id="KW-0533">Nickel</keyword>
<keyword id="KW-1185">Reference proteome</keyword>
<feature type="chain" id="PRO_1000070676" description="Urease subunit alpha">
    <location>
        <begin position="1"/>
        <end position="562"/>
    </location>
</feature>
<feature type="domain" description="Urease" evidence="1">
    <location>
        <begin position="131"/>
        <end position="562"/>
    </location>
</feature>
<feature type="active site" description="Proton donor" evidence="1">
    <location>
        <position position="322"/>
    </location>
</feature>
<feature type="binding site" evidence="1">
    <location>
        <position position="136"/>
    </location>
    <ligand>
        <name>Ni(2+)</name>
        <dbReference type="ChEBI" id="CHEBI:49786"/>
        <label>1</label>
    </ligand>
</feature>
<feature type="binding site" evidence="1">
    <location>
        <position position="138"/>
    </location>
    <ligand>
        <name>Ni(2+)</name>
        <dbReference type="ChEBI" id="CHEBI:49786"/>
        <label>1</label>
    </ligand>
</feature>
<feature type="binding site" description="via carbamate group" evidence="1">
    <location>
        <position position="219"/>
    </location>
    <ligand>
        <name>Ni(2+)</name>
        <dbReference type="ChEBI" id="CHEBI:49786"/>
        <label>1</label>
    </ligand>
</feature>
<feature type="binding site" description="via carbamate group" evidence="1">
    <location>
        <position position="219"/>
    </location>
    <ligand>
        <name>Ni(2+)</name>
        <dbReference type="ChEBI" id="CHEBI:49786"/>
        <label>2</label>
    </ligand>
</feature>
<feature type="binding site" evidence="1">
    <location>
        <position position="221"/>
    </location>
    <ligand>
        <name>substrate</name>
    </ligand>
</feature>
<feature type="binding site" evidence="1">
    <location>
        <position position="248"/>
    </location>
    <ligand>
        <name>Ni(2+)</name>
        <dbReference type="ChEBI" id="CHEBI:49786"/>
        <label>2</label>
    </ligand>
</feature>
<feature type="binding site" evidence="1">
    <location>
        <position position="274"/>
    </location>
    <ligand>
        <name>Ni(2+)</name>
        <dbReference type="ChEBI" id="CHEBI:49786"/>
        <label>2</label>
    </ligand>
</feature>
<feature type="binding site" evidence="1">
    <location>
        <position position="362"/>
    </location>
    <ligand>
        <name>Ni(2+)</name>
        <dbReference type="ChEBI" id="CHEBI:49786"/>
        <label>1</label>
    </ligand>
</feature>
<feature type="modified residue" description="N6-carboxylysine" evidence="1">
    <location>
        <position position="219"/>
    </location>
</feature>